<comment type="subcellular location">
    <subcellularLocation>
        <location evidence="1">Bud neck</location>
    </subcellularLocation>
</comment>
<comment type="similarity">
    <text evidence="3">Belongs to the AIM44 family.</text>
</comment>
<keyword id="KW-1185">Reference proteome</keyword>
<evidence type="ECO:0000250" key="1"/>
<evidence type="ECO:0000256" key="2">
    <source>
        <dbReference type="SAM" id="MobiDB-lite"/>
    </source>
</evidence>
<evidence type="ECO:0000305" key="3"/>
<name>AIM44_EREGS</name>
<protein>
    <recommendedName>
        <fullName>Altered inheritance of mitochondria protein 44</fullName>
    </recommendedName>
</protein>
<gene>
    <name type="primary">AIM44</name>
    <name type="ordered locus">ACR148W</name>
</gene>
<reference key="1">
    <citation type="journal article" date="2004" name="Science">
        <title>The Ashbya gossypii genome as a tool for mapping the ancient Saccharomyces cerevisiae genome.</title>
        <authorList>
            <person name="Dietrich F.S."/>
            <person name="Voegeli S."/>
            <person name="Brachat S."/>
            <person name="Lerch A."/>
            <person name="Gates K."/>
            <person name="Steiner S."/>
            <person name="Mohr C."/>
            <person name="Poehlmann R."/>
            <person name="Luedi P."/>
            <person name="Choi S."/>
            <person name="Wing R.A."/>
            <person name="Flavier A."/>
            <person name="Gaffney T.D."/>
            <person name="Philippsen P."/>
        </authorList>
    </citation>
    <scope>NUCLEOTIDE SEQUENCE [LARGE SCALE GENOMIC DNA]</scope>
    <source>
        <strain>ATCC 10895 / CBS 109.51 / FGSC 9923 / NRRL Y-1056</strain>
    </source>
</reference>
<reference key="2">
    <citation type="journal article" date="2013" name="G3 (Bethesda)">
        <title>Genomes of Ashbya fungi isolated from insects reveal four mating-type loci, numerous translocations, lack of transposons, and distinct gene duplications.</title>
        <authorList>
            <person name="Dietrich F.S."/>
            <person name="Voegeli S."/>
            <person name="Kuo S."/>
            <person name="Philippsen P."/>
        </authorList>
    </citation>
    <scope>GENOME REANNOTATION</scope>
    <source>
        <strain>ATCC 10895 / CBS 109.51 / FGSC 9923 / NRRL Y-1056</strain>
    </source>
</reference>
<organism>
    <name type="scientific">Eremothecium gossypii (strain ATCC 10895 / CBS 109.51 / FGSC 9923 / NRRL Y-1056)</name>
    <name type="common">Yeast</name>
    <name type="synonym">Ashbya gossypii</name>
    <dbReference type="NCBI Taxonomy" id="284811"/>
    <lineage>
        <taxon>Eukaryota</taxon>
        <taxon>Fungi</taxon>
        <taxon>Dikarya</taxon>
        <taxon>Ascomycota</taxon>
        <taxon>Saccharomycotina</taxon>
        <taxon>Saccharomycetes</taxon>
        <taxon>Saccharomycetales</taxon>
        <taxon>Saccharomycetaceae</taxon>
        <taxon>Eremothecium</taxon>
    </lineage>
</organism>
<dbReference type="EMBL" id="AE016816">
    <property type="protein sequence ID" value="AAS51374.1"/>
    <property type="molecule type" value="Genomic_DNA"/>
</dbReference>
<dbReference type="RefSeq" id="NP_983550.1">
    <property type="nucleotide sequence ID" value="NM_208903.1"/>
</dbReference>
<dbReference type="SMR" id="Q75BX3"/>
<dbReference type="FunCoup" id="Q75BX3">
    <property type="interactions" value="40"/>
</dbReference>
<dbReference type="STRING" id="284811.Q75BX3"/>
<dbReference type="EnsemblFungi" id="AAS51374">
    <property type="protein sequence ID" value="AAS51374"/>
    <property type="gene ID" value="AGOS_ACR148W"/>
</dbReference>
<dbReference type="GeneID" id="4619682"/>
<dbReference type="KEGG" id="ago:AGOS_ACR148W"/>
<dbReference type="eggNOG" id="ENOG502R02U">
    <property type="taxonomic scope" value="Eukaryota"/>
</dbReference>
<dbReference type="HOGENOM" id="CLU_433467_0_0_1"/>
<dbReference type="InParanoid" id="Q75BX3"/>
<dbReference type="OMA" id="NHEDEYV"/>
<dbReference type="OrthoDB" id="4065285at2759"/>
<dbReference type="Proteomes" id="UP000000591">
    <property type="component" value="Chromosome III"/>
</dbReference>
<dbReference type="GO" id="GO:0005935">
    <property type="term" value="C:cellular bud neck"/>
    <property type="evidence" value="ECO:0007669"/>
    <property type="project" value="UniProtKB-SubCell"/>
</dbReference>
<accession>Q75BX3</accession>
<sequence>MPIGKLRRSKAISFRGPASPSLKFKSFETLQGKPLGEMGQNGHKQEEDMAAQRPHFPAEAGAEQEMKCHVAETPAQNSQVPSTTMENGFYSFANISDNTTNKNTNRYSYLSDNTACQLLAPATGTDYYKSLTPTMKPITERQNHAGTTMSLDTIPTAENISFQITLPTVPPSVISSRSSLINRQRSLSMRYSSPSSMSSLGSTPTKLTTLKRSNAIRCKGGLLQFFSQYAVKTGKKLVKWKIALRKRLFKFQRRSTKNKKNSSPTTSHLKRVNGYVSNVRRSFSTQSRLALVPEIVRRTPSRRHLTANTGMKDATPASPSRTSIRRTPSSIKRAASTLSSNYVYRDGSDTSSQAPELKSTGSSLAPAPSQMVRSTALTSLNSIVRQPSIVVNNKVIPLSRFPGEKMQLPIREEDEEEEEPSTKTDDYVIDTSKRMSTIGEIQASRISSSSGSISSHSSSIQSSHFDDASNSCPLNDSIESDSDIECTRTAWNHFLRTVIAERIRMRLQLAKLQELALLKDDSLDILYAVLRKTLDEPADKSSSTYDPDIMPENNSETGLGNGFRSSDQLSRLKEGSRKRNTSSSTMLALPEALATVRRSITMPVGLNYI</sequence>
<proteinExistence type="inferred from homology"/>
<feature type="chain" id="PRO_0000408694" description="Altered inheritance of mitochondria protein 44">
    <location>
        <begin position="1"/>
        <end position="609"/>
    </location>
</feature>
<feature type="region of interest" description="Disordered" evidence="2">
    <location>
        <begin position="300"/>
        <end position="330"/>
    </location>
</feature>
<feature type="region of interest" description="Disordered" evidence="2">
    <location>
        <begin position="342"/>
        <end position="370"/>
    </location>
</feature>
<feature type="region of interest" description="Disordered" evidence="2">
    <location>
        <begin position="537"/>
        <end position="584"/>
    </location>
</feature>
<feature type="compositionally biased region" description="Low complexity" evidence="2">
    <location>
        <begin position="315"/>
        <end position="330"/>
    </location>
</feature>
<feature type="compositionally biased region" description="Polar residues" evidence="2">
    <location>
        <begin position="349"/>
        <end position="363"/>
    </location>
</feature>
<feature type="compositionally biased region" description="Polar residues" evidence="2">
    <location>
        <begin position="552"/>
        <end position="569"/>
    </location>
</feature>